<proteinExistence type="evidence at protein level"/>
<name>NUSB_STAAN</name>
<dbReference type="EMBL" id="BA000018">
    <property type="protein sequence ID" value="BAB42617.1"/>
    <property type="molecule type" value="Genomic_DNA"/>
</dbReference>
<dbReference type="PIR" id="D89932">
    <property type="entry name" value="D89932"/>
</dbReference>
<dbReference type="RefSeq" id="WP_000087385.1">
    <property type="nucleotide sequence ID" value="NC_002745.2"/>
</dbReference>
<dbReference type="SMR" id="P65578"/>
<dbReference type="EnsemblBacteria" id="BAB42617">
    <property type="protein sequence ID" value="BAB42617"/>
    <property type="gene ID" value="BAB42617"/>
</dbReference>
<dbReference type="KEGG" id="sau:SA1355"/>
<dbReference type="HOGENOM" id="CLU_087843_3_3_9"/>
<dbReference type="GO" id="GO:0005829">
    <property type="term" value="C:cytosol"/>
    <property type="evidence" value="ECO:0007669"/>
    <property type="project" value="TreeGrafter"/>
</dbReference>
<dbReference type="GO" id="GO:0003723">
    <property type="term" value="F:RNA binding"/>
    <property type="evidence" value="ECO:0007669"/>
    <property type="project" value="UniProtKB-UniRule"/>
</dbReference>
<dbReference type="GO" id="GO:0006353">
    <property type="term" value="P:DNA-templated transcription termination"/>
    <property type="evidence" value="ECO:0007669"/>
    <property type="project" value="UniProtKB-UniRule"/>
</dbReference>
<dbReference type="GO" id="GO:0031564">
    <property type="term" value="P:transcription antitermination"/>
    <property type="evidence" value="ECO:0007669"/>
    <property type="project" value="UniProtKB-KW"/>
</dbReference>
<dbReference type="FunFam" id="1.10.940.10:FF:000011">
    <property type="entry name" value="Transcription antitermination protein NusB"/>
    <property type="match status" value="1"/>
</dbReference>
<dbReference type="Gene3D" id="1.10.940.10">
    <property type="entry name" value="NusB-like"/>
    <property type="match status" value="1"/>
</dbReference>
<dbReference type="HAMAP" id="MF_00073">
    <property type="entry name" value="NusB"/>
    <property type="match status" value="1"/>
</dbReference>
<dbReference type="InterPro" id="IPR035926">
    <property type="entry name" value="NusB-like_sf"/>
</dbReference>
<dbReference type="InterPro" id="IPR011605">
    <property type="entry name" value="NusB_fam"/>
</dbReference>
<dbReference type="InterPro" id="IPR006027">
    <property type="entry name" value="NusB_RsmB_TIM44"/>
</dbReference>
<dbReference type="NCBIfam" id="TIGR01951">
    <property type="entry name" value="nusB"/>
    <property type="match status" value="1"/>
</dbReference>
<dbReference type="PANTHER" id="PTHR11078:SF3">
    <property type="entry name" value="ANTITERMINATION NUSB DOMAIN-CONTAINING PROTEIN"/>
    <property type="match status" value="1"/>
</dbReference>
<dbReference type="PANTHER" id="PTHR11078">
    <property type="entry name" value="N UTILIZATION SUBSTANCE PROTEIN B-RELATED"/>
    <property type="match status" value="1"/>
</dbReference>
<dbReference type="Pfam" id="PF01029">
    <property type="entry name" value="NusB"/>
    <property type="match status" value="1"/>
</dbReference>
<dbReference type="SUPFAM" id="SSF48013">
    <property type="entry name" value="NusB-like"/>
    <property type="match status" value="1"/>
</dbReference>
<feature type="chain" id="PRO_0000176579" description="Transcription antitermination protein NusB">
    <location>
        <begin position="1"/>
        <end position="129"/>
    </location>
</feature>
<organism>
    <name type="scientific">Staphylococcus aureus (strain N315)</name>
    <dbReference type="NCBI Taxonomy" id="158879"/>
    <lineage>
        <taxon>Bacteria</taxon>
        <taxon>Bacillati</taxon>
        <taxon>Bacillota</taxon>
        <taxon>Bacilli</taxon>
        <taxon>Bacillales</taxon>
        <taxon>Staphylococcaceae</taxon>
        <taxon>Staphylococcus</taxon>
    </lineage>
</organism>
<evidence type="ECO:0000255" key="1">
    <source>
        <dbReference type="HAMAP-Rule" id="MF_00073"/>
    </source>
</evidence>
<evidence type="ECO:0000305" key="2"/>
<comment type="function">
    <text evidence="1">Involved in transcription antitermination. Required for transcription of ribosomal RNA (rRNA) genes. Binds specifically to the boxA antiterminator sequence of the ribosomal RNA (rrn) operons.</text>
</comment>
<comment type="similarity">
    <text evidence="1 2">Belongs to the NusB family.</text>
</comment>
<sequence length="129" mass="15061">MSRKESRVQAFQTLFQLEMKDSDLTINEAISFIKDDNPDLDFEFIHWLVSGVKDHEPVLDETISPYLKDWTIARLLKTDRIILRMATYEILHSDTPAKVVMNEAVELTKQFSDDDHYKFINGVLSNIKK</sequence>
<gene>
    <name evidence="1" type="primary">nusB</name>
    <name type="ordered locus">SA1355</name>
</gene>
<accession>P65578</accession>
<accession>Q99TW9</accession>
<reference key="1">
    <citation type="journal article" date="2001" name="Lancet">
        <title>Whole genome sequencing of meticillin-resistant Staphylococcus aureus.</title>
        <authorList>
            <person name="Kuroda M."/>
            <person name="Ohta T."/>
            <person name="Uchiyama I."/>
            <person name="Baba T."/>
            <person name="Yuzawa H."/>
            <person name="Kobayashi I."/>
            <person name="Cui L."/>
            <person name="Oguchi A."/>
            <person name="Aoki K."/>
            <person name="Nagai Y."/>
            <person name="Lian J.-Q."/>
            <person name="Ito T."/>
            <person name="Kanamori M."/>
            <person name="Matsumaru H."/>
            <person name="Maruyama A."/>
            <person name="Murakami H."/>
            <person name="Hosoyama A."/>
            <person name="Mizutani-Ui Y."/>
            <person name="Takahashi N.K."/>
            <person name="Sawano T."/>
            <person name="Inoue R."/>
            <person name="Kaito C."/>
            <person name="Sekimizu K."/>
            <person name="Hirakawa H."/>
            <person name="Kuhara S."/>
            <person name="Goto S."/>
            <person name="Yabuzaki J."/>
            <person name="Kanehisa M."/>
            <person name="Yamashita A."/>
            <person name="Oshima K."/>
            <person name="Furuya K."/>
            <person name="Yoshino C."/>
            <person name="Shiba T."/>
            <person name="Hattori M."/>
            <person name="Ogasawara N."/>
            <person name="Hayashi H."/>
            <person name="Hiramatsu K."/>
        </authorList>
    </citation>
    <scope>NUCLEOTIDE SEQUENCE [LARGE SCALE GENOMIC DNA]</scope>
    <source>
        <strain>N315</strain>
    </source>
</reference>
<reference key="2">
    <citation type="submission" date="2007-10" db="UniProtKB">
        <title>Shotgun proteomic analysis of total and membrane protein extracts of S. aureus strain N315.</title>
        <authorList>
            <person name="Vaezzadeh A.R."/>
            <person name="Deshusses J."/>
            <person name="Lescuyer P."/>
            <person name="Hochstrasser D.F."/>
        </authorList>
    </citation>
    <scope>IDENTIFICATION BY MASS SPECTROMETRY [LARGE SCALE ANALYSIS]</scope>
    <source>
        <strain>N315</strain>
    </source>
</reference>
<keyword id="KW-0694">RNA-binding</keyword>
<keyword id="KW-0804">Transcription</keyword>
<keyword id="KW-0889">Transcription antitermination</keyword>
<keyword id="KW-0805">Transcription regulation</keyword>
<protein>
    <recommendedName>
        <fullName evidence="1">Transcription antitermination protein NusB</fullName>
    </recommendedName>
    <alternativeName>
        <fullName evidence="1">Antitermination factor NusB</fullName>
    </alternativeName>
</protein>